<name>NANT_SALHS</name>
<feature type="chain" id="PRO_1000214061" description="Sialic acid transporter NanT">
    <location>
        <begin position="1"/>
        <end position="496"/>
    </location>
</feature>
<feature type="transmembrane region" description="Helical" evidence="1">
    <location>
        <begin position="22"/>
        <end position="42"/>
    </location>
</feature>
<feature type="transmembrane region" description="Helical" evidence="1">
    <location>
        <begin position="58"/>
        <end position="78"/>
    </location>
</feature>
<feature type="transmembrane region" description="Helical" evidence="1">
    <location>
        <begin position="86"/>
        <end position="106"/>
    </location>
</feature>
<feature type="transmembrane region" description="Helical" evidence="1">
    <location>
        <begin position="116"/>
        <end position="136"/>
    </location>
</feature>
<feature type="transmembrane region" description="Helical" evidence="1">
    <location>
        <begin position="148"/>
        <end position="168"/>
    </location>
</feature>
<feature type="transmembrane region" description="Helical" evidence="1">
    <location>
        <begin position="170"/>
        <end position="190"/>
    </location>
</feature>
<feature type="transmembrane region" description="Helical" evidence="1">
    <location>
        <begin position="224"/>
        <end position="244"/>
    </location>
</feature>
<feature type="transmembrane region" description="Helical" evidence="1">
    <location>
        <begin position="247"/>
        <end position="267"/>
    </location>
</feature>
<feature type="transmembrane region" description="Helical" evidence="1">
    <location>
        <begin position="278"/>
        <end position="298"/>
    </location>
</feature>
<feature type="transmembrane region" description="Helical" evidence="1">
    <location>
        <begin position="313"/>
        <end position="333"/>
    </location>
</feature>
<feature type="transmembrane region" description="Helical" evidence="1">
    <location>
        <begin position="353"/>
        <end position="373"/>
    </location>
</feature>
<feature type="transmembrane region" description="Helical" evidence="1">
    <location>
        <begin position="374"/>
        <end position="394"/>
    </location>
</feature>
<feature type="transmembrane region" description="Helical" evidence="1">
    <location>
        <begin position="406"/>
        <end position="426"/>
    </location>
</feature>
<feature type="transmembrane region" description="Helical" evidence="1">
    <location>
        <begin position="431"/>
        <end position="451"/>
    </location>
</feature>
<sequence>MSTSTQNIPWYRHLNRAQWRAFSAAWLGYLLDGFDFVLIALVLTEVQSEFGLTTVQAASLISAAFISRWFGGLLLGAMGDRYGRRLAMVSSIILFSVGTLACGFAPGYTTMFIARLVIGMGMAGEYGSSATYVIESWPKHLRNKASGFLISGFSVGAVVAAQVYSLVVPVWGWRALFFIGILPIIFALWLRKNIPEAEDWKEKHAGKAPVRTMVDILYRGEHRIINILMTFVAAAALWFCFAGNLQNAAIVAGLGLLCAVIFISFMVQSSGKRWPTGVMLMLVVLFAFLYSWPIQALLPTYLKTELAYDPHTVANVLFFSGFGAAVGCCVGGFLGDWLGTRKAYVCSLLASQILIIPVFAIGGTNVWVLGLLLFFQQMLGQGIAGILPKLIGGYFDTDQRAAGLGFTYNVGALGGALAPILGALIAQRLDLGTALASLSFSLTFVVILLIGLDMPSRVQRWLRPEALRTHDAIDDKPFSGAVPLGSGKGAFVKTKS</sequence>
<comment type="function">
    <text evidence="1">Catalyzes the proton-dependent transport of sialic acid.</text>
</comment>
<comment type="catalytic activity">
    <reaction evidence="1">
        <text>N-acetylneuraminate(in) + H(+)(in) = N-acetylneuraminate(out) + H(+)(out)</text>
        <dbReference type="Rhea" id="RHEA:28987"/>
        <dbReference type="ChEBI" id="CHEBI:15378"/>
        <dbReference type="ChEBI" id="CHEBI:35418"/>
    </reaction>
</comment>
<comment type="subcellular location">
    <subcellularLocation>
        <location evidence="1">Cell inner membrane</location>
        <topology evidence="1">Multi-pass membrane protein</topology>
    </subcellularLocation>
</comment>
<comment type="similarity">
    <text evidence="1">Belongs to the major facilitator superfamily. Sialate:H(+) symporter (SHS) (TC 2.A.1.12) family.</text>
</comment>
<protein>
    <recommendedName>
        <fullName evidence="1">Sialic acid transporter NanT</fullName>
    </recommendedName>
    <alternativeName>
        <fullName evidence="1">Sialic acid permease</fullName>
    </alternativeName>
    <alternativeName>
        <fullName evidence="1">Sialic acid/H(+) symporter</fullName>
    </alternativeName>
</protein>
<accession>B4TJR2</accession>
<organism>
    <name type="scientific">Salmonella heidelberg (strain SL476)</name>
    <dbReference type="NCBI Taxonomy" id="454169"/>
    <lineage>
        <taxon>Bacteria</taxon>
        <taxon>Pseudomonadati</taxon>
        <taxon>Pseudomonadota</taxon>
        <taxon>Gammaproteobacteria</taxon>
        <taxon>Enterobacterales</taxon>
        <taxon>Enterobacteriaceae</taxon>
        <taxon>Salmonella</taxon>
    </lineage>
</organism>
<reference key="1">
    <citation type="journal article" date="2011" name="J. Bacteriol.">
        <title>Comparative genomics of 28 Salmonella enterica isolates: evidence for CRISPR-mediated adaptive sublineage evolution.</title>
        <authorList>
            <person name="Fricke W.F."/>
            <person name="Mammel M.K."/>
            <person name="McDermott P.F."/>
            <person name="Tartera C."/>
            <person name="White D.G."/>
            <person name="Leclerc J.E."/>
            <person name="Ravel J."/>
            <person name="Cebula T.A."/>
        </authorList>
    </citation>
    <scope>NUCLEOTIDE SEQUENCE [LARGE SCALE GENOMIC DNA]</scope>
    <source>
        <strain>SL476</strain>
    </source>
</reference>
<gene>
    <name evidence="1" type="primary">nanT</name>
    <name type="ordered locus">SeHA_C3636</name>
</gene>
<keyword id="KW-0997">Cell inner membrane</keyword>
<keyword id="KW-1003">Cell membrane</keyword>
<keyword id="KW-0472">Membrane</keyword>
<keyword id="KW-0762">Sugar transport</keyword>
<keyword id="KW-0812">Transmembrane</keyword>
<keyword id="KW-1133">Transmembrane helix</keyword>
<keyword id="KW-0813">Transport</keyword>
<dbReference type="EMBL" id="CP001120">
    <property type="protein sequence ID" value="ACF67788.1"/>
    <property type="molecule type" value="Genomic_DNA"/>
</dbReference>
<dbReference type="RefSeq" id="WP_000108074.1">
    <property type="nucleotide sequence ID" value="NC_011083.1"/>
</dbReference>
<dbReference type="SMR" id="B4TJR2"/>
<dbReference type="KEGG" id="seh:SeHA_C3636"/>
<dbReference type="HOGENOM" id="CLU_001265_46_8_6"/>
<dbReference type="Proteomes" id="UP000001866">
    <property type="component" value="Chromosome"/>
</dbReference>
<dbReference type="GO" id="GO:0005886">
    <property type="term" value="C:plasma membrane"/>
    <property type="evidence" value="ECO:0007669"/>
    <property type="project" value="UniProtKB-SubCell"/>
</dbReference>
<dbReference type="GO" id="GO:0046943">
    <property type="term" value="F:carboxylic acid transmembrane transporter activity"/>
    <property type="evidence" value="ECO:0007669"/>
    <property type="project" value="TreeGrafter"/>
</dbReference>
<dbReference type="GO" id="GO:0015538">
    <property type="term" value="F:sialic acid:proton symporter activity"/>
    <property type="evidence" value="ECO:0007669"/>
    <property type="project" value="UniProtKB-UniRule"/>
</dbReference>
<dbReference type="CDD" id="cd17316">
    <property type="entry name" value="MFS_SV2_like"/>
    <property type="match status" value="1"/>
</dbReference>
<dbReference type="FunFam" id="1.20.1250.20:FF:000027">
    <property type="entry name" value="Sialic acid transporter NanT"/>
    <property type="match status" value="1"/>
</dbReference>
<dbReference type="FunFam" id="1.20.1250.20:FF:000038">
    <property type="entry name" value="Sialic acid transporter NanT"/>
    <property type="match status" value="1"/>
</dbReference>
<dbReference type="Gene3D" id="1.20.1250.20">
    <property type="entry name" value="MFS general substrate transporter like domains"/>
    <property type="match status" value="2"/>
</dbReference>
<dbReference type="HAMAP" id="MF_01238">
    <property type="entry name" value="MFS_NanT"/>
    <property type="match status" value="1"/>
</dbReference>
<dbReference type="InterPro" id="IPR011701">
    <property type="entry name" value="MFS"/>
</dbReference>
<dbReference type="InterPro" id="IPR020846">
    <property type="entry name" value="MFS_dom"/>
</dbReference>
<dbReference type="InterPro" id="IPR036259">
    <property type="entry name" value="MFS_trans_sf"/>
</dbReference>
<dbReference type="InterPro" id="IPR004742">
    <property type="entry name" value="SA_transporter"/>
</dbReference>
<dbReference type="NCBIfam" id="TIGR00891">
    <property type="entry name" value="2A0112"/>
    <property type="match status" value="1"/>
</dbReference>
<dbReference type="NCBIfam" id="NF003024">
    <property type="entry name" value="PRK03893.1"/>
    <property type="match status" value="1"/>
</dbReference>
<dbReference type="PANTHER" id="PTHR23508">
    <property type="entry name" value="CARBOXYLIC ACID TRANSPORTER PROTEIN HOMOLOG"/>
    <property type="match status" value="1"/>
</dbReference>
<dbReference type="PANTHER" id="PTHR23508:SF3">
    <property type="entry name" value="SIALIC ACID TRANSPORTER NANT"/>
    <property type="match status" value="1"/>
</dbReference>
<dbReference type="Pfam" id="PF07690">
    <property type="entry name" value="MFS_1"/>
    <property type="match status" value="1"/>
</dbReference>
<dbReference type="SUPFAM" id="SSF103473">
    <property type="entry name" value="MFS general substrate transporter"/>
    <property type="match status" value="1"/>
</dbReference>
<dbReference type="PROSITE" id="PS50850">
    <property type="entry name" value="MFS"/>
    <property type="match status" value="1"/>
</dbReference>
<proteinExistence type="inferred from homology"/>
<evidence type="ECO:0000255" key="1">
    <source>
        <dbReference type="HAMAP-Rule" id="MF_01238"/>
    </source>
</evidence>